<proteinExistence type="inferred from homology"/>
<keyword id="KW-0067">ATP-binding</keyword>
<keyword id="KW-0436">Ligase</keyword>
<keyword id="KW-0547">Nucleotide-binding</keyword>
<keyword id="KW-0648">Protein biosynthesis</keyword>
<reference key="1">
    <citation type="journal article" date="2007" name="Nat. Biotechnol.">
        <title>Comparative analysis of the complete genome sequence of the plant growth-promoting bacterium Bacillus amyloliquefaciens FZB42.</title>
        <authorList>
            <person name="Chen X.H."/>
            <person name="Koumoutsi A."/>
            <person name="Scholz R."/>
            <person name="Eisenreich A."/>
            <person name="Schneider K."/>
            <person name="Heinemeyer I."/>
            <person name="Morgenstern B."/>
            <person name="Voss B."/>
            <person name="Hess W.R."/>
            <person name="Reva O."/>
            <person name="Junge H."/>
            <person name="Voigt B."/>
            <person name="Jungblut P.R."/>
            <person name="Vater J."/>
            <person name="Suessmuth R."/>
            <person name="Liesegang H."/>
            <person name="Strittmatter A."/>
            <person name="Gottschalk G."/>
            <person name="Borriss R."/>
        </authorList>
    </citation>
    <scope>NUCLEOTIDE SEQUENCE [LARGE SCALE GENOMIC DNA]</scope>
    <source>
        <strain>DSM 23117 / BGSC 10A6 / LMG 26770 / FZB42</strain>
    </source>
</reference>
<evidence type="ECO:0000255" key="1">
    <source>
        <dbReference type="HAMAP-Rule" id="MF_00121"/>
    </source>
</evidence>
<feature type="chain" id="PRO_1000015934" description="Aspartyl/glutamyl-tRNA(Asn/Gln) amidotransferase subunit B">
    <location>
        <begin position="1"/>
        <end position="476"/>
    </location>
</feature>
<comment type="function">
    <text evidence="1">Allows the formation of correctly charged Asn-tRNA(Asn) or Gln-tRNA(Gln) through the transamidation of misacylated Asp-tRNA(Asn) or Glu-tRNA(Gln) in organisms which lack either or both of asparaginyl-tRNA or glutaminyl-tRNA synthetases. The reaction takes place in the presence of glutamine and ATP through an activated phospho-Asp-tRNA(Asn) or phospho-Glu-tRNA(Gln).</text>
</comment>
<comment type="catalytic activity">
    <reaction evidence="1">
        <text>L-glutamyl-tRNA(Gln) + L-glutamine + ATP + H2O = L-glutaminyl-tRNA(Gln) + L-glutamate + ADP + phosphate + H(+)</text>
        <dbReference type="Rhea" id="RHEA:17521"/>
        <dbReference type="Rhea" id="RHEA-COMP:9681"/>
        <dbReference type="Rhea" id="RHEA-COMP:9684"/>
        <dbReference type="ChEBI" id="CHEBI:15377"/>
        <dbReference type="ChEBI" id="CHEBI:15378"/>
        <dbReference type="ChEBI" id="CHEBI:29985"/>
        <dbReference type="ChEBI" id="CHEBI:30616"/>
        <dbReference type="ChEBI" id="CHEBI:43474"/>
        <dbReference type="ChEBI" id="CHEBI:58359"/>
        <dbReference type="ChEBI" id="CHEBI:78520"/>
        <dbReference type="ChEBI" id="CHEBI:78521"/>
        <dbReference type="ChEBI" id="CHEBI:456216"/>
    </reaction>
</comment>
<comment type="catalytic activity">
    <reaction evidence="1">
        <text>L-aspartyl-tRNA(Asn) + L-glutamine + ATP + H2O = L-asparaginyl-tRNA(Asn) + L-glutamate + ADP + phosphate + 2 H(+)</text>
        <dbReference type="Rhea" id="RHEA:14513"/>
        <dbReference type="Rhea" id="RHEA-COMP:9674"/>
        <dbReference type="Rhea" id="RHEA-COMP:9677"/>
        <dbReference type="ChEBI" id="CHEBI:15377"/>
        <dbReference type="ChEBI" id="CHEBI:15378"/>
        <dbReference type="ChEBI" id="CHEBI:29985"/>
        <dbReference type="ChEBI" id="CHEBI:30616"/>
        <dbReference type="ChEBI" id="CHEBI:43474"/>
        <dbReference type="ChEBI" id="CHEBI:58359"/>
        <dbReference type="ChEBI" id="CHEBI:78515"/>
        <dbReference type="ChEBI" id="CHEBI:78516"/>
        <dbReference type="ChEBI" id="CHEBI:456216"/>
    </reaction>
</comment>
<comment type="subunit">
    <text evidence="1">Heterotrimer of A, B and C subunits.</text>
</comment>
<comment type="similarity">
    <text evidence="1">Belongs to the GatB/GatE family. GatB subfamily.</text>
</comment>
<organism>
    <name type="scientific">Bacillus velezensis (strain DSM 23117 / BGSC 10A6 / LMG 26770 / FZB42)</name>
    <name type="common">Bacillus amyloliquefaciens subsp. plantarum</name>
    <dbReference type="NCBI Taxonomy" id="326423"/>
    <lineage>
        <taxon>Bacteria</taxon>
        <taxon>Bacillati</taxon>
        <taxon>Bacillota</taxon>
        <taxon>Bacilli</taxon>
        <taxon>Bacillales</taxon>
        <taxon>Bacillaceae</taxon>
        <taxon>Bacillus</taxon>
        <taxon>Bacillus amyloliquefaciens group</taxon>
    </lineage>
</organism>
<accession>A7Z268</accession>
<name>GATB_BACVZ</name>
<gene>
    <name evidence="1" type="primary">gatB</name>
    <name type="ordered locus">RBAM_007090</name>
</gene>
<dbReference type="EC" id="6.3.5.-" evidence="1"/>
<dbReference type="EMBL" id="CP000560">
    <property type="protein sequence ID" value="ABS73094.1"/>
    <property type="molecule type" value="Genomic_DNA"/>
</dbReference>
<dbReference type="RefSeq" id="WP_003155730.1">
    <property type="nucleotide sequence ID" value="NC_009725.2"/>
</dbReference>
<dbReference type="SMR" id="A7Z268"/>
<dbReference type="GeneID" id="93079844"/>
<dbReference type="KEGG" id="bay:RBAM_007090"/>
<dbReference type="HOGENOM" id="CLU_019240_0_0_9"/>
<dbReference type="Proteomes" id="UP000001120">
    <property type="component" value="Chromosome"/>
</dbReference>
<dbReference type="GO" id="GO:0050566">
    <property type="term" value="F:asparaginyl-tRNA synthase (glutamine-hydrolyzing) activity"/>
    <property type="evidence" value="ECO:0007669"/>
    <property type="project" value="RHEA"/>
</dbReference>
<dbReference type="GO" id="GO:0005524">
    <property type="term" value="F:ATP binding"/>
    <property type="evidence" value="ECO:0007669"/>
    <property type="project" value="UniProtKB-KW"/>
</dbReference>
<dbReference type="GO" id="GO:0050567">
    <property type="term" value="F:glutaminyl-tRNA synthase (glutamine-hydrolyzing) activity"/>
    <property type="evidence" value="ECO:0007669"/>
    <property type="project" value="UniProtKB-UniRule"/>
</dbReference>
<dbReference type="GO" id="GO:0070681">
    <property type="term" value="P:glutaminyl-tRNAGln biosynthesis via transamidation"/>
    <property type="evidence" value="ECO:0007669"/>
    <property type="project" value="TreeGrafter"/>
</dbReference>
<dbReference type="GO" id="GO:0006412">
    <property type="term" value="P:translation"/>
    <property type="evidence" value="ECO:0007669"/>
    <property type="project" value="UniProtKB-UniRule"/>
</dbReference>
<dbReference type="FunFam" id="1.10.10.410:FF:000001">
    <property type="entry name" value="Aspartyl/glutamyl-tRNA(Asn/Gln) amidotransferase subunit B"/>
    <property type="match status" value="1"/>
</dbReference>
<dbReference type="FunFam" id="1.10.150.380:FF:000001">
    <property type="entry name" value="Aspartyl/glutamyl-tRNA(Asn/Gln) amidotransferase subunit B"/>
    <property type="match status" value="1"/>
</dbReference>
<dbReference type="Gene3D" id="1.10.10.410">
    <property type="match status" value="1"/>
</dbReference>
<dbReference type="Gene3D" id="1.10.150.380">
    <property type="entry name" value="GatB domain, N-terminal subdomain"/>
    <property type="match status" value="1"/>
</dbReference>
<dbReference type="HAMAP" id="MF_00121">
    <property type="entry name" value="GatB"/>
    <property type="match status" value="1"/>
</dbReference>
<dbReference type="InterPro" id="IPR017959">
    <property type="entry name" value="Asn/Gln-tRNA_amidoTrfase_suB/E"/>
</dbReference>
<dbReference type="InterPro" id="IPR006075">
    <property type="entry name" value="Asn/Gln-tRNA_Trfase_suB/E_cat"/>
</dbReference>
<dbReference type="InterPro" id="IPR018027">
    <property type="entry name" value="Asn/Gln_amidotransferase"/>
</dbReference>
<dbReference type="InterPro" id="IPR003789">
    <property type="entry name" value="Asn/Gln_tRNA_amidoTrase-B-like"/>
</dbReference>
<dbReference type="InterPro" id="IPR004413">
    <property type="entry name" value="GatB"/>
</dbReference>
<dbReference type="InterPro" id="IPR042114">
    <property type="entry name" value="GatB_C_1"/>
</dbReference>
<dbReference type="InterPro" id="IPR023168">
    <property type="entry name" value="GatB_Yqey_C_2"/>
</dbReference>
<dbReference type="InterPro" id="IPR017958">
    <property type="entry name" value="Gln-tRNA_amidoTrfase_suB_CS"/>
</dbReference>
<dbReference type="InterPro" id="IPR014746">
    <property type="entry name" value="Gln_synth/guanido_kin_cat_dom"/>
</dbReference>
<dbReference type="NCBIfam" id="TIGR00133">
    <property type="entry name" value="gatB"/>
    <property type="match status" value="1"/>
</dbReference>
<dbReference type="NCBIfam" id="NF004011">
    <property type="entry name" value="PRK05477.1-1"/>
    <property type="match status" value="1"/>
</dbReference>
<dbReference type="NCBIfam" id="NF004012">
    <property type="entry name" value="PRK05477.1-2"/>
    <property type="match status" value="1"/>
</dbReference>
<dbReference type="NCBIfam" id="NF004014">
    <property type="entry name" value="PRK05477.1-4"/>
    <property type="match status" value="1"/>
</dbReference>
<dbReference type="PANTHER" id="PTHR11659">
    <property type="entry name" value="GLUTAMYL-TRNA GLN AMIDOTRANSFERASE SUBUNIT B MITOCHONDRIAL AND PROKARYOTIC PET112-RELATED"/>
    <property type="match status" value="1"/>
</dbReference>
<dbReference type="PANTHER" id="PTHR11659:SF0">
    <property type="entry name" value="GLUTAMYL-TRNA(GLN) AMIDOTRANSFERASE SUBUNIT B, MITOCHONDRIAL"/>
    <property type="match status" value="1"/>
</dbReference>
<dbReference type="Pfam" id="PF02934">
    <property type="entry name" value="GatB_N"/>
    <property type="match status" value="1"/>
</dbReference>
<dbReference type="Pfam" id="PF02637">
    <property type="entry name" value="GatB_Yqey"/>
    <property type="match status" value="1"/>
</dbReference>
<dbReference type="SMART" id="SM00845">
    <property type="entry name" value="GatB_Yqey"/>
    <property type="match status" value="1"/>
</dbReference>
<dbReference type="SUPFAM" id="SSF89095">
    <property type="entry name" value="GatB/YqeY motif"/>
    <property type="match status" value="1"/>
</dbReference>
<dbReference type="SUPFAM" id="SSF55931">
    <property type="entry name" value="Glutamine synthetase/guanido kinase"/>
    <property type="match status" value="1"/>
</dbReference>
<dbReference type="PROSITE" id="PS01234">
    <property type="entry name" value="GATB"/>
    <property type="match status" value="1"/>
</dbReference>
<protein>
    <recommendedName>
        <fullName evidence="1">Aspartyl/glutamyl-tRNA(Asn/Gln) amidotransferase subunit B</fullName>
        <shortName evidence="1">Asp/Glu-ADT subunit B</shortName>
        <ecNumber evidence="1">6.3.5.-</ecNumber>
    </recommendedName>
</protein>
<sequence>MNFETVIGLEVHVELKTKSKIFSSSPTPFGAEANTQTSVIDLGYPGVLPVLNKEAVEFAMKAAMALNCEIATDTKFDRKNYFYPDNPKAYQISQFDKPIGENGWIEIEVGGKTKKIGITRLHLEEDAGKLTHTGDGYSLVDFNRQGTPLVEIVSEPDIRTPEEAYAYLEKLKSIIQYTGVSDCKMEEGSLRCDANISLRPIGQEKFGTKTELKNLNSFAFVQKGLEHEEKRQEQVLLSGGVIQQETRRYDEATKKTILMRVKEGSDDYRYFPEPDLVELYIDDEWKERVRATIPELPDERRKRYIEELGLPAYDAMVLTLTKEMADFFEETVNKGAEAKQASNWLMGEVSAYLNAEQKELEDVALTPEGLAGMIKLIEKGTISSKIAKKVFKELIEKGGDAEKIVKEKGLVQISDESVLLKLVTDALDSNPQSIEDFKNGKDRAIGFLVGQIMKASKGQANPPMVNKILLEEIKKR</sequence>